<feature type="chain" id="PRO_0000058105" description="OV39 antigen">
    <location>
        <begin position="1" status="less than"/>
        <end position="115" status="greater than"/>
    </location>
</feature>
<feature type="sequence variant" description="In strain: Isolate Guatemala.">
    <original>R</original>
    <variation>Q</variation>
    <location>
        <position position="59"/>
    </location>
</feature>
<feature type="non-terminal residue">
    <location>
        <position position="1"/>
    </location>
</feature>
<feature type="non-terminal residue">
    <location>
        <position position="115"/>
    </location>
</feature>
<proteinExistence type="evidence at transcript level"/>
<sequence length="115" mass="13086">IEAAKSSNNCAVPPFVGDLPIAENKEVLSIWKDYKSGEDCSNQRRETQQVIDDLPDEVRAMVFGRLPSFLNGASTDVKKMFRAIMYNRTLNYDLKKQELSKLAEEILSKKQLAEF</sequence>
<name>OV39_ONCVO</name>
<protein>
    <recommendedName>
        <fullName>OV39 antigen</fullName>
    </recommendedName>
</protein>
<gene>
    <name type="primary">OV39</name>
</gene>
<accession>P31730</accession>
<reference key="1">
    <citation type="journal article" date="1991" name="J. Exp. Med.">
        <title>Immunological crossreactivity between a cloned antigen of Onchocerca volvulus and a component of the retinal pigment epithelium.</title>
        <authorList>
            <person name="Braun G."/>
            <person name="McKechnie N.M."/>
            <person name="Connor V."/>
            <person name="Gilbert C.E."/>
            <person name="Engelbrecht F."/>
            <person name="Whitworth J.A."/>
            <person name="Taylor D.W."/>
        </authorList>
    </citation>
    <scope>NUCLEOTIDE SEQUENCE [MRNA]</scope>
    <source>
        <strain>Isolate Guatemala</strain>
        <strain>Isolate Sierra Leone</strain>
    </source>
</reference>
<organism>
    <name type="scientific">Onchocerca volvulus</name>
    <dbReference type="NCBI Taxonomy" id="6282"/>
    <lineage>
        <taxon>Eukaryota</taxon>
        <taxon>Metazoa</taxon>
        <taxon>Ecdysozoa</taxon>
        <taxon>Nematoda</taxon>
        <taxon>Chromadorea</taxon>
        <taxon>Rhabditida</taxon>
        <taxon>Spirurina</taxon>
        <taxon>Spiruromorpha</taxon>
        <taxon>Filarioidea</taxon>
        <taxon>Onchocercidae</taxon>
        <taxon>Onchocerca</taxon>
    </lineage>
</organism>
<comment type="miscellaneous">
    <text>Antibodies against this antigen can recognize a human retinal pigment epithelium antigen explaining in part the retinal damage caused in onchocerciasis.</text>
</comment>
<keyword id="KW-1185">Reference proteome</keyword>
<dbReference type="EMBL" id="X59074">
    <property type="protein sequence ID" value="CAA41797.1"/>
    <property type="molecule type" value="mRNA"/>
</dbReference>
<dbReference type="PIR" id="PH0861">
    <property type="entry name" value="PH0861"/>
</dbReference>
<dbReference type="SMR" id="P31730"/>
<dbReference type="STRING" id="6282.P31730"/>
<dbReference type="HOGENOM" id="CLU_086462_0_0_1"/>
<dbReference type="Proteomes" id="UP000024404">
    <property type="component" value="Unassembled WGS sequence"/>
</dbReference>